<feature type="chain" id="PRO_0000115238" description="Endonuclease MutS2">
    <location>
        <begin position="1"/>
        <end position="757"/>
    </location>
</feature>
<feature type="domain" description="Smr" evidence="1">
    <location>
        <begin position="681"/>
        <end position="756"/>
    </location>
</feature>
<feature type="binding site" evidence="1">
    <location>
        <begin position="321"/>
        <end position="328"/>
    </location>
    <ligand>
        <name>ATP</name>
        <dbReference type="ChEBI" id="CHEBI:30616"/>
    </ligand>
</feature>
<dbReference type="EC" id="3.1.-.-" evidence="1 2"/>
<dbReference type="EC" id="3.6.4.-" evidence="1 2"/>
<dbReference type="EMBL" id="AE000512">
    <property type="protein sequence ID" value="AAD36353.1"/>
    <property type="molecule type" value="Genomic_DNA"/>
</dbReference>
<dbReference type="PIR" id="B72273">
    <property type="entry name" value="B72273"/>
</dbReference>
<dbReference type="RefSeq" id="NP_229083.1">
    <property type="nucleotide sequence ID" value="NC_000853.1"/>
</dbReference>
<dbReference type="RefSeq" id="WP_004079958.1">
    <property type="nucleotide sequence ID" value="NC_000853.1"/>
</dbReference>
<dbReference type="SMR" id="Q9X105"/>
<dbReference type="FunCoup" id="Q9X105">
    <property type="interactions" value="101"/>
</dbReference>
<dbReference type="STRING" id="243274.TM_1278"/>
<dbReference type="PaxDb" id="243274-THEMA_07945"/>
<dbReference type="DNASU" id="898205"/>
<dbReference type="EnsemblBacteria" id="AAD36353">
    <property type="protein sequence ID" value="AAD36353"/>
    <property type="gene ID" value="TM_1278"/>
</dbReference>
<dbReference type="KEGG" id="tma:TM1278"/>
<dbReference type="KEGG" id="tmi:THEMA_07945"/>
<dbReference type="KEGG" id="tmm:Tmari_1283"/>
<dbReference type="KEGG" id="tmw:THMA_1303"/>
<dbReference type="eggNOG" id="COG1193">
    <property type="taxonomic scope" value="Bacteria"/>
</dbReference>
<dbReference type="InParanoid" id="Q9X105"/>
<dbReference type="OrthoDB" id="9808166at2"/>
<dbReference type="Proteomes" id="UP000008183">
    <property type="component" value="Chromosome"/>
</dbReference>
<dbReference type="GO" id="GO:0005524">
    <property type="term" value="F:ATP binding"/>
    <property type="evidence" value="ECO:0007669"/>
    <property type="project" value="UniProtKB-UniRule"/>
</dbReference>
<dbReference type="GO" id="GO:0016887">
    <property type="term" value="F:ATP hydrolysis activity"/>
    <property type="evidence" value="ECO:0007669"/>
    <property type="project" value="InterPro"/>
</dbReference>
<dbReference type="GO" id="GO:0140664">
    <property type="term" value="F:ATP-dependent DNA damage sensor activity"/>
    <property type="evidence" value="ECO:0007669"/>
    <property type="project" value="InterPro"/>
</dbReference>
<dbReference type="GO" id="GO:0003690">
    <property type="term" value="F:double-stranded DNA binding"/>
    <property type="evidence" value="ECO:0000318"/>
    <property type="project" value="GO_Central"/>
</dbReference>
<dbReference type="GO" id="GO:0004519">
    <property type="term" value="F:endonuclease activity"/>
    <property type="evidence" value="ECO:0007669"/>
    <property type="project" value="UniProtKB-UniRule"/>
</dbReference>
<dbReference type="GO" id="GO:0030983">
    <property type="term" value="F:mismatched DNA binding"/>
    <property type="evidence" value="ECO:0007669"/>
    <property type="project" value="InterPro"/>
</dbReference>
<dbReference type="GO" id="GO:0043023">
    <property type="term" value="F:ribosomal large subunit binding"/>
    <property type="evidence" value="ECO:0007669"/>
    <property type="project" value="UniProtKB-UniRule"/>
</dbReference>
<dbReference type="GO" id="GO:0019843">
    <property type="term" value="F:rRNA binding"/>
    <property type="evidence" value="ECO:0007669"/>
    <property type="project" value="UniProtKB-UniRule"/>
</dbReference>
<dbReference type="GO" id="GO:0006298">
    <property type="term" value="P:mismatch repair"/>
    <property type="evidence" value="ECO:0007669"/>
    <property type="project" value="InterPro"/>
</dbReference>
<dbReference type="GO" id="GO:0045910">
    <property type="term" value="P:negative regulation of DNA recombination"/>
    <property type="evidence" value="ECO:0007669"/>
    <property type="project" value="InterPro"/>
</dbReference>
<dbReference type="GO" id="GO:0072344">
    <property type="term" value="P:rescue of stalled ribosome"/>
    <property type="evidence" value="ECO:0007669"/>
    <property type="project" value="UniProtKB-UniRule"/>
</dbReference>
<dbReference type="CDD" id="cd03280">
    <property type="entry name" value="ABC_MutS2"/>
    <property type="match status" value="1"/>
</dbReference>
<dbReference type="FunFam" id="3.40.50.300:FF:000830">
    <property type="entry name" value="Endonuclease MutS2"/>
    <property type="match status" value="1"/>
</dbReference>
<dbReference type="Gene3D" id="1.10.1420.10">
    <property type="match status" value="2"/>
</dbReference>
<dbReference type="Gene3D" id="3.30.1370.110">
    <property type="match status" value="1"/>
</dbReference>
<dbReference type="Gene3D" id="3.40.50.300">
    <property type="entry name" value="P-loop containing nucleotide triphosphate hydrolases"/>
    <property type="match status" value="1"/>
</dbReference>
<dbReference type="HAMAP" id="MF_00092">
    <property type="entry name" value="MutS2"/>
    <property type="match status" value="1"/>
</dbReference>
<dbReference type="InterPro" id="IPR000432">
    <property type="entry name" value="DNA_mismatch_repair_MutS_C"/>
</dbReference>
<dbReference type="InterPro" id="IPR007696">
    <property type="entry name" value="DNA_mismatch_repair_MutS_core"/>
</dbReference>
<dbReference type="InterPro" id="IPR036187">
    <property type="entry name" value="DNA_mismatch_repair_MutS_sf"/>
</dbReference>
<dbReference type="InterPro" id="IPR046893">
    <property type="entry name" value="MSSS"/>
</dbReference>
<dbReference type="InterPro" id="IPR045076">
    <property type="entry name" value="MutS"/>
</dbReference>
<dbReference type="InterPro" id="IPR005747">
    <property type="entry name" value="MutS2"/>
</dbReference>
<dbReference type="InterPro" id="IPR027417">
    <property type="entry name" value="P-loop_NTPase"/>
</dbReference>
<dbReference type="InterPro" id="IPR002625">
    <property type="entry name" value="Smr_dom"/>
</dbReference>
<dbReference type="InterPro" id="IPR036063">
    <property type="entry name" value="Smr_dom_sf"/>
</dbReference>
<dbReference type="NCBIfam" id="TIGR01069">
    <property type="entry name" value="mutS2"/>
    <property type="match status" value="1"/>
</dbReference>
<dbReference type="PANTHER" id="PTHR48466:SF2">
    <property type="entry name" value="OS10G0509000 PROTEIN"/>
    <property type="match status" value="1"/>
</dbReference>
<dbReference type="PANTHER" id="PTHR48466">
    <property type="entry name" value="OS10G0509000 PROTEIN-RELATED"/>
    <property type="match status" value="1"/>
</dbReference>
<dbReference type="Pfam" id="PF20297">
    <property type="entry name" value="MSSS"/>
    <property type="match status" value="1"/>
</dbReference>
<dbReference type="Pfam" id="PF00488">
    <property type="entry name" value="MutS_V"/>
    <property type="match status" value="1"/>
</dbReference>
<dbReference type="Pfam" id="PF01713">
    <property type="entry name" value="Smr"/>
    <property type="match status" value="1"/>
</dbReference>
<dbReference type="PIRSF" id="PIRSF005814">
    <property type="entry name" value="MutS_YshD"/>
    <property type="match status" value="1"/>
</dbReference>
<dbReference type="SMART" id="SM00534">
    <property type="entry name" value="MUTSac"/>
    <property type="match status" value="1"/>
</dbReference>
<dbReference type="SMART" id="SM00533">
    <property type="entry name" value="MUTSd"/>
    <property type="match status" value="1"/>
</dbReference>
<dbReference type="SMART" id="SM00463">
    <property type="entry name" value="SMR"/>
    <property type="match status" value="1"/>
</dbReference>
<dbReference type="SUPFAM" id="SSF48334">
    <property type="entry name" value="DNA repair protein MutS, domain III"/>
    <property type="match status" value="1"/>
</dbReference>
<dbReference type="SUPFAM" id="SSF52540">
    <property type="entry name" value="P-loop containing nucleoside triphosphate hydrolases"/>
    <property type="match status" value="1"/>
</dbReference>
<dbReference type="SUPFAM" id="SSF160443">
    <property type="entry name" value="SMR domain-like"/>
    <property type="match status" value="1"/>
</dbReference>
<dbReference type="PROSITE" id="PS00486">
    <property type="entry name" value="DNA_MISMATCH_REPAIR_2"/>
    <property type="match status" value="1"/>
</dbReference>
<dbReference type="PROSITE" id="PS50828">
    <property type="entry name" value="SMR"/>
    <property type="match status" value="1"/>
</dbReference>
<proteinExistence type="evidence at protein level"/>
<evidence type="ECO:0000255" key="1">
    <source>
        <dbReference type="HAMAP-Rule" id="MF_00092"/>
    </source>
</evidence>
<evidence type="ECO:0000269" key="2">
    <source>
    </source>
</evidence>
<evidence type="ECO:0000303" key="3">
    <source>
    </source>
</evidence>
<name>MUTS2_THEMA</name>
<keyword id="KW-0067">ATP-binding</keyword>
<keyword id="KW-0238">DNA-binding</keyword>
<keyword id="KW-0255">Endonuclease</keyword>
<keyword id="KW-0378">Hydrolase</keyword>
<keyword id="KW-0540">Nuclease</keyword>
<keyword id="KW-0547">Nucleotide-binding</keyword>
<keyword id="KW-1185">Reference proteome</keyword>
<keyword id="KW-0694">RNA-binding</keyword>
<keyword id="KW-0699">rRNA-binding</keyword>
<reference key="1">
    <citation type="journal article" date="1999" name="Nature">
        <title>Evidence for lateral gene transfer between Archaea and Bacteria from genome sequence of Thermotoga maritima.</title>
        <authorList>
            <person name="Nelson K.E."/>
            <person name="Clayton R.A."/>
            <person name="Gill S.R."/>
            <person name="Gwinn M.L."/>
            <person name="Dodson R.J."/>
            <person name="Haft D.H."/>
            <person name="Hickey E.K."/>
            <person name="Peterson J.D."/>
            <person name="Nelson W.C."/>
            <person name="Ketchum K.A."/>
            <person name="McDonald L.A."/>
            <person name="Utterback T.R."/>
            <person name="Malek J.A."/>
            <person name="Linher K.D."/>
            <person name="Garrett M.M."/>
            <person name="Stewart A.M."/>
            <person name="Cotton M.D."/>
            <person name="Pratt M.S."/>
            <person name="Phillips C.A."/>
            <person name="Richardson D.L."/>
            <person name="Heidelberg J.F."/>
            <person name="Sutton G.G."/>
            <person name="Fleischmann R.D."/>
            <person name="Eisen J.A."/>
            <person name="White O."/>
            <person name="Salzberg S.L."/>
            <person name="Smith H.O."/>
            <person name="Venter J.C."/>
            <person name="Fraser C.M."/>
        </authorList>
    </citation>
    <scope>NUCLEOTIDE SEQUENCE [LARGE SCALE GENOMIC DNA]</scope>
    <source>
        <strain>ATCC 43589 / DSM 3109 / JCM 10099 / NBRC 100826 / MSB8</strain>
    </source>
</reference>
<reference key="2">
    <citation type="journal article" date="2012" name="PLoS ONE">
        <title>Characterization of multi-functional properties and conformational analysis of MutS2 from Thermotoga maritima MSB8.</title>
        <authorList>
            <person name="Jeong E."/>
            <person name="Jo H."/>
            <person name="Kim T.G."/>
            <person name="Ban C."/>
        </authorList>
    </citation>
    <scope>FUNCTION</scope>
    <scope>ATPASE ACTIVITY</scope>
    <scope>NUCLEASE ACTIVITY</scope>
    <scope>DNA-BINDING</scope>
    <scope>ACTIVITY REGULATION</scope>
    <scope>SUBUNIT</scope>
    <scope>INTERACTION WITH MUTL</scope>
    <source>
        <strain>ATCC 43589 / DSM 3109 / JCM 10099 / NBRC 100826 / MSB8</strain>
    </source>
</reference>
<gene>
    <name evidence="1 3" type="primary">mutS2</name>
    <name type="synonym">mutSB</name>
    <name evidence="1" type="synonym">rqcU</name>
    <name type="ordered locus">TM_1278</name>
</gene>
<organism>
    <name type="scientific">Thermotoga maritima (strain ATCC 43589 / DSM 3109 / JCM 10099 / NBRC 100826 / MSB8)</name>
    <dbReference type="NCBI Taxonomy" id="243274"/>
    <lineage>
        <taxon>Bacteria</taxon>
        <taxon>Thermotogati</taxon>
        <taxon>Thermotogota</taxon>
        <taxon>Thermotogae</taxon>
        <taxon>Thermotogales</taxon>
        <taxon>Thermotogaceae</taxon>
        <taxon>Thermotoga</taxon>
    </lineage>
</organism>
<protein>
    <recommendedName>
        <fullName evidence="1 3">Endonuclease MutS2</fullName>
        <ecNumber evidence="1 2">3.1.-.-</ecNumber>
    </recommendedName>
    <alternativeName>
        <fullName evidence="1">Ribosome-associated protein quality control-upstream factor</fullName>
        <shortName evidence="1">RQC-upstream factor</shortName>
        <shortName evidence="1">RqcU</shortName>
        <ecNumber evidence="1 2">3.6.4.-</ecNumber>
    </alternativeName>
</protein>
<accession>Q9X105</accession>
<comment type="function">
    <text evidence="1 2">Endonuclease that is involved in the suppression of homologous recombination and thus may have a key role in the control of bacterial genetic diversity. Has ATPase activity (PubMed:22545085). Binds to DNA (PubMed:22545085).</text>
</comment>
<comment type="function">
    <text evidence="1">Acts as a ribosome collision sensor, splitting the ribosome into its 2 subunits. Detects stalled/collided 70S ribosomes which it binds and splits by an ATP-hydrolysis driven conformational change. Acts upstream of the ribosome quality control system (RQC), a ribosome-associated complex that mediates the extraction of incompletely synthesized nascent chains from stalled ribosomes and their subsequent degradation. Probably generates substrates for RQC.</text>
</comment>
<comment type="activity regulation">
    <text evidence="2">Nuclease activity is stimulated by interaction with MutL and inhibited in the presence of non-hydrolytic ATP (ADPnP). ATPase activity is stimulated by DNA.</text>
</comment>
<comment type="subunit">
    <text evidence="1 2">Homodimer. Binds to stalled ribosomes, contacting rRNA. Interacts with MutL (PubMed:22545085).</text>
</comment>
<comment type="similarity">
    <text evidence="1">Belongs to the DNA mismatch repair MutS family. MutS2 subfamily.</text>
</comment>
<sequence length="757" mass="86626">MDYLESLDFPKVVEIVKKYALSDLGRKHLDTLKPTVNPWDELELVEELLNYFNRWGEPPIKGLNDISQEVEKVKSGSPLEPWELLRVSVFLEGCDILKKEFEKREYSRLKETFSRLSSFREFVEEVNRCIEQDGEISDRASPRLREIRTEKKRLSSEIKRKADDFVRTHSQILQEQMYVYRDGRYLFPVKASMKNAVRGIVHHLSSSGATVFLEPDEFVELNNRVRLLEEEERLEISRILRQLTNILLSRLNDLERNVELIARFDSLYARVKFAREFNGTVVKPSSRIRLVNARHPLIPKERVVPINLELPPNKRGFIITGPNMGGKTVTVKTVGLFTALMMSGFPLPCDEGTELKVFPKIMADIGEEQSIEQSLSTFSSHMKKIVEIVKNADSDSLVILDELGSGTDPVEGAALAIAIIEDLLEKGATIFVTTHLTPVKVFAMNHPLLLNASMEFDPETLSPTYRVLVGVPGGSHAFQIAEKLGLDKRIIENARSRLSREEMELEGLIRSLHEKISLLEEEKRKLQKEREEYMKLREKYEEDYKKLRRMKIEEFDKELRELNDYIRKVKKELDQAIHVAKTGSVDEMREAVKTIEKEKKDLEQKRIEEATEEEIKPGDHVKMEGGTSVGKVVEVKSGTALVDFGFLRLKVPVSKLRKTKKEEKKETSTFSYKPSSFRTEIDIRGMTVEEAEPVVKKFIDDLMMNGISKGYIIHGKGTGKLASGVWEILRKDKRVVSFRFGTPSEGGTGVTVVEVKV</sequence>